<comment type="function">
    <text evidence="1">The antigen 85 proteins (FbpA, FbpB, FbpC) are responsible for the high affinity of mycobacteria for fibronectin, a large adhesive glycoprotein, which facilitates the attachment of M.tuberculosis to murine alveolar macrophages (AMs). They also help to maintain the integrity of the cell wall by catalyzing the transfer of mycolic acids to cell wall arabinogalactan and through the synthesis of alpha,alpha-trehalose dimycolate (TDM, cord factor). They catalyze the transfer of a mycoloyl residue from one molecule of alpha,alpha-trehalose monomycolate (TMM) to another TMM, leading to the formation of TDM (By similarity).</text>
</comment>
<comment type="catalytic activity">
    <reaction>
        <text>2 alpha,alpha'-trehalose 6-mycolate = alpha,alpha'-trehalose 6,6'-bismycolate + alpha,alpha-trehalose</text>
        <dbReference type="Rhea" id="RHEA:23472"/>
        <dbReference type="ChEBI" id="CHEBI:16551"/>
        <dbReference type="ChEBI" id="CHEBI:18195"/>
        <dbReference type="ChEBI" id="CHEBI:18234"/>
        <dbReference type="EC" id="2.3.1.122"/>
    </reaction>
</comment>
<comment type="catalytic activity">
    <reaction>
        <text>an acyl-CoA + a 1,2-diacyl-sn-glycerol = a triacyl-sn-glycerol + CoA</text>
        <dbReference type="Rhea" id="RHEA:10868"/>
        <dbReference type="ChEBI" id="CHEBI:17815"/>
        <dbReference type="ChEBI" id="CHEBI:57287"/>
        <dbReference type="ChEBI" id="CHEBI:58342"/>
        <dbReference type="ChEBI" id="CHEBI:64615"/>
        <dbReference type="EC" id="2.3.1.20"/>
    </reaction>
</comment>
<comment type="subcellular location">
    <subcellularLocation>
        <location evidence="1">Secreted</location>
    </subcellularLocation>
</comment>
<comment type="similarity">
    <text evidence="3">Belongs to the mycobacterial A85 antigen family.</text>
</comment>
<feature type="signal peptide" evidence="2">
    <location>
        <begin position="1"/>
        <end position="38"/>
    </location>
</feature>
<feature type="chain" id="PRO_0000000220" description="Diacylglycerol acyltransferase/mycolyltransferase Ag85B">
    <location>
        <begin position="39"/>
        <end position="327"/>
    </location>
</feature>
<feature type="region of interest" description="Fibronectin-binding">
    <location>
        <begin position="96"/>
        <end position="106"/>
    </location>
</feature>
<feature type="active site" description="Nucleophile" evidence="1">
    <location>
        <position position="164"/>
    </location>
</feature>
<feature type="active site" evidence="1">
    <location>
        <position position="268"/>
    </location>
</feature>
<feature type="active site" evidence="1">
    <location>
        <position position="300"/>
    </location>
</feature>
<feature type="binding site" evidence="1">
    <location>
        <begin position="80"/>
        <end position="81"/>
    </location>
    <ligand>
        <name>substrate</name>
    </ligand>
</feature>
<feature type="binding site" evidence="1">
    <location>
        <position position="164"/>
    </location>
    <ligand>
        <name>substrate</name>
    </ligand>
</feature>
<feature type="binding site" evidence="1">
    <location>
        <position position="192"/>
    </location>
    <ligand>
        <name>substrate</name>
    </ligand>
</feature>
<feature type="binding site" evidence="1">
    <location>
        <begin position="270"/>
        <end position="273"/>
    </location>
    <ligand>
        <name>substrate</name>
    </ligand>
</feature>
<feature type="binding site" evidence="1">
    <location>
        <position position="277"/>
    </location>
    <ligand>
        <name>substrate</name>
    </ligand>
</feature>
<feature type="binding site" evidence="1">
    <location>
        <begin position="300"/>
        <end position="302"/>
    </location>
    <ligand>
        <name>substrate</name>
    </ligand>
</feature>
<feature type="disulfide bond" evidence="1">
    <location>
        <begin position="125"/>
        <end position="130"/>
    </location>
</feature>
<feature type="sequence conflict" description="In Ref. 1; CAA43269." evidence="3" ref="1">
    <original>S</original>
    <variation>T</variation>
    <location>
        <position position="59"/>
    </location>
</feature>
<keyword id="KW-0012">Acyltransferase</keyword>
<keyword id="KW-1015">Disulfide bond</keyword>
<keyword id="KW-1185">Reference proteome</keyword>
<keyword id="KW-0964">Secreted</keyword>
<keyword id="KW-0732">Signal</keyword>
<keyword id="KW-0808">Transferase</keyword>
<evidence type="ECO:0000250" key="1"/>
<evidence type="ECO:0000255" key="2"/>
<evidence type="ECO:0000305" key="3"/>
<sequence>MIDVSGKIRAWGRWLLVGAAATLPSLISLAGGAATASAFSRPGLPVEYLQVPSEAMGRSIKVQFQNGGNGSPAVYLLDGLRAQDDYNGWDINTSAFEWYYQSGLSVVMPVGGQSSFYSDWYSPACGKAGCTTYKWETFLTSELPKWLSANRSVKSTGSAVVGLSMAGSSALILAAYHPDQFIYAGSLSALMDSSQGIEPQLIGLAMGDAGGYKAADMWGPPNDPAWQRNDPILQAGKLVANNTHLWVYCGNGTPSELGGTNVPAEFLENFVHGSNLKFQDAYNGAGGHNAVFNLNADGTHSWEYWGAQLNAMKPDLQNTLMAVPRSG</sequence>
<protein>
    <recommendedName>
        <fullName>Diacylglycerol acyltransferase/mycolyltransferase Ag85B</fullName>
        <shortName>DGAT</shortName>
        <ecNumber>2.3.1.122</ecNumber>
        <ecNumber>2.3.1.20</ecNumber>
    </recommendedName>
    <alternativeName>
        <fullName>30 kDa extracellular protein</fullName>
    </alternativeName>
    <alternativeName>
        <fullName>Acyl-CoA:diacylglycerol acyltransferase</fullName>
    </alternativeName>
    <alternativeName>
        <fullName>Antigen 85 complex B</fullName>
        <shortName>85B</shortName>
        <shortName>Ag85B</shortName>
    </alternativeName>
    <alternativeName>
        <fullName>Extracellular alpha-antigen</fullName>
    </alternativeName>
    <alternativeName>
        <fullName>Fibronectin-binding protein B</fullName>
        <shortName>Fbps B</shortName>
    </alternativeName>
</protein>
<organism>
    <name type="scientific">Mycobacterium leprae (strain TN)</name>
    <dbReference type="NCBI Taxonomy" id="272631"/>
    <lineage>
        <taxon>Bacteria</taxon>
        <taxon>Bacillati</taxon>
        <taxon>Actinomycetota</taxon>
        <taxon>Actinomycetes</taxon>
        <taxon>Mycobacteriales</taxon>
        <taxon>Mycobacteriaceae</taxon>
        <taxon>Mycobacterium</taxon>
    </lineage>
</organism>
<dbReference type="EC" id="2.3.1.122"/>
<dbReference type="EC" id="2.3.1.20"/>
<dbReference type="EMBL" id="X60934">
    <property type="protein sequence ID" value="CAA43269.1"/>
    <property type="molecule type" value="Genomic_DNA"/>
</dbReference>
<dbReference type="EMBL" id="AL049571">
    <property type="protein sequence ID" value="CAB40285.1"/>
    <property type="molecule type" value="Genomic_DNA"/>
</dbReference>
<dbReference type="EMBL" id="AL583924">
    <property type="protein sequence ID" value="CAC30983.1"/>
    <property type="molecule type" value="Genomic_DNA"/>
</dbReference>
<dbReference type="PIR" id="G87162">
    <property type="entry name" value="G87162"/>
</dbReference>
<dbReference type="PIR" id="S20038">
    <property type="entry name" value="S20038"/>
</dbReference>
<dbReference type="PIR" id="S34434">
    <property type="entry name" value="S34434"/>
</dbReference>
<dbReference type="RefSeq" id="NP_302359.1">
    <property type="nucleotide sequence ID" value="NC_002677.1"/>
</dbReference>
<dbReference type="RefSeq" id="WP_010908679.1">
    <property type="nucleotide sequence ID" value="NC_002677.1"/>
</dbReference>
<dbReference type="SMR" id="P31951"/>
<dbReference type="STRING" id="272631.gene:17575880"/>
<dbReference type="ESTHER" id="mycle-a85b">
    <property type="family name" value="A85-Mycolyl-transferase"/>
</dbReference>
<dbReference type="KEGG" id="mle:ML2028"/>
<dbReference type="PATRIC" id="fig|272631.5.peg.3822"/>
<dbReference type="Leproma" id="ML2028"/>
<dbReference type="eggNOG" id="COG0627">
    <property type="taxonomic scope" value="Bacteria"/>
</dbReference>
<dbReference type="HOGENOM" id="CLU_026624_3_1_11"/>
<dbReference type="OrthoDB" id="4366784at2"/>
<dbReference type="Proteomes" id="UP000000806">
    <property type="component" value="Chromosome"/>
</dbReference>
<dbReference type="GO" id="GO:0005576">
    <property type="term" value="C:extracellular region"/>
    <property type="evidence" value="ECO:0007669"/>
    <property type="project" value="UniProtKB-SubCell"/>
</dbReference>
<dbReference type="GO" id="GO:0004144">
    <property type="term" value="F:diacylglycerol O-acyltransferase activity"/>
    <property type="evidence" value="ECO:0007669"/>
    <property type="project" value="UniProtKB-EC"/>
</dbReference>
<dbReference type="GO" id="GO:0050348">
    <property type="term" value="F:trehalose O-mycolyltransferase activity"/>
    <property type="evidence" value="ECO:0007669"/>
    <property type="project" value="UniProtKB-EC"/>
</dbReference>
<dbReference type="FunFam" id="3.40.50.1820:FF:000086">
    <property type="entry name" value="Diacylglycerol acyltransferase/mycolyltransferase Ag85C"/>
    <property type="match status" value="1"/>
</dbReference>
<dbReference type="Gene3D" id="3.40.50.1820">
    <property type="entry name" value="alpha/beta hydrolase"/>
    <property type="match status" value="1"/>
</dbReference>
<dbReference type="InterPro" id="IPR029058">
    <property type="entry name" value="AB_hydrolase_fold"/>
</dbReference>
<dbReference type="InterPro" id="IPR000801">
    <property type="entry name" value="Esterase-like"/>
</dbReference>
<dbReference type="InterPro" id="IPR050583">
    <property type="entry name" value="Mycobacterial_A85_antigen"/>
</dbReference>
<dbReference type="PANTHER" id="PTHR48098:SF1">
    <property type="entry name" value="DIACYLGLYCEROL ACYLTRANSFERASE_MYCOLYLTRANSFERASE AG85A"/>
    <property type="match status" value="1"/>
</dbReference>
<dbReference type="PANTHER" id="PTHR48098">
    <property type="entry name" value="ENTEROCHELIN ESTERASE-RELATED"/>
    <property type="match status" value="1"/>
</dbReference>
<dbReference type="Pfam" id="PF00756">
    <property type="entry name" value="Esterase"/>
    <property type="match status" value="1"/>
</dbReference>
<dbReference type="SUPFAM" id="SSF53474">
    <property type="entry name" value="alpha/beta-Hydrolases"/>
    <property type="match status" value="1"/>
</dbReference>
<accession>P31951</accession>
<accession>Q9RIA5</accession>
<gene>
    <name type="primary">fbpB</name>
    <name type="ordered locus">ML2028</name>
    <name type="ORF">MLCB561.03c</name>
</gene>
<name>A85B_MYCLE</name>
<proteinExistence type="inferred from homology"/>
<reference key="1">
    <citation type="journal article" date="1991" name="Nucleic Acids Res.">
        <title>Nucleotide sequence of the gene coding for the 85-B antigen of Mycobacterium leprae.</title>
        <authorList>
            <person name="de Mendonca-Lima L."/>
            <person name="Content J."/>
            <person name="van Heuverswyn H."/>
            <person name="Degrave W."/>
        </authorList>
    </citation>
    <scope>NUCLEOTIDE SEQUENCE [GENOMIC DNA]</scope>
</reference>
<reference key="2">
    <citation type="journal article" date="2001" name="Nature">
        <title>Massive gene decay in the leprosy bacillus.</title>
        <authorList>
            <person name="Cole S.T."/>
            <person name="Eiglmeier K."/>
            <person name="Parkhill J."/>
            <person name="James K.D."/>
            <person name="Thomson N.R."/>
            <person name="Wheeler P.R."/>
            <person name="Honore N."/>
            <person name="Garnier T."/>
            <person name="Churcher C.M."/>
            <person name="Harris D.E."/>
            <person name="Mungall K.L."/>
            <person name="Basham D."/>
            <person name="Brown D."/>
            <person name="Chillingworth T."/>
            <person name="Connor R."/>
            <person name="Davies R.M."/>
            <person name="Devlin K."/>
            <person name="Duthoy S."/>
            <person name="Feltwell T."/>
            <person name="Fraser A."/>
            <person name="Hamlin N."/>
            <person name="Holroyd S."/>
            <person name="Hornsby T."/>
            <person name="Jagels K."/>
            <person name="Lacroix C."/>
            <person name="Maclean J."/>
            <person name="Moule S."/>
            <person name="Murphy L.D."/>
            <person name="Oliver K."/>
            <person name="Quail M.A."/>
            <person name="Rajandream M.A."/>
            <person name="Rutherford K.M."/>
            <person name="Rutter S."/>
            <person name="Seeger K."/>
            <person name="Simon S."/>
            <person name="Simmonds M."/>
            <person name="Skelton J."/>
            <person name="Squares R."/>
            <person name="Squares S."/>
            <person name="Stevens K."/>
            <person name="Taylor K."/>
            <person name="Whitehead S."/>
            <person name="Woodward J.R."/>
            <person name="Barrell B.G."/>
        </authorList>
    </citation>
    <scope>NUCLEOTIDE SEQUENCE [LARGE SCALE GENOMIC DNA]</scope>
    <source>
        <strain>TN</strain>
    </source>
</reference>